<comment type="function">
    <text evidence="1">Inhibits trypsin activity and prophenoloxidase (PPO) activation, an enzyme essential for both clotting and insect innate immune responses. It does not inhibit activity of chymotrypsin and protease K, and has no effect on phenoloxidase (PO) activity.</text>
</comment>
<comment type="subcellular location">
    <subcellularLocation>
        <location evidence="4">Secreted</location>
    </subcellularLocation>
</comment>
<comment type="tissue specificity">
    <text evidence="7">Expressed by the venom gland.</text>
</comment>
<comment type="mass spectrometry">
    <molecule>U-reduvitoxin-Pr10a.2</molecule>
    <text>Monoisotopic mass.</text>
</comment>
<comment type="similarity">
    <text evidence="6">Belongs to the protease inhibitor I19 family.</text>
</comment>
<evidence type="ECO:0000250" key="1">
    <source>
        <dbReference type="UniProtKB" id="A0A7M6UNN1"/>
    </source>
</evidence>
<evidence type="ECO:0000255" key="2"/>
<evidence type="ECO:0000255" key="3">
    <source>
        <dbReference type="PROSITE-ProRule" id="PRU00776"/>
    </source>
</evidence>
<evidence type="ECO:0000269" key="4">
    <source>
    </source>
</evidence>
<evidence type="ECO:0000303" key="5">
    <source>
    </source>
</evidence>
<evidence type="ECO:0000305" key="6"/>
<evidence type="ECO:0000305" key="7">
    <source>
    </source>
</evidence>
<evidence type="ECO:0000312" key="8">
    <source>
        <dbReference type="EMBL" id="QHB21530.1"/>
    </source>
</evidence>
<protein>
    <recommendedName>
        <fullName evidence="5">U-reduvitoxin-Pr10a</fullName>
        <shortName evidence="5">U-RDTX-Pr10a</shortName>
    </recommendedName>
    <alternativeName>
        <fullName evidence="8">Venom pacifastin domain peptide Pr10a</fullName>
    </alternativeName>
    <component>
        <recommendedName>
            <fullName evidence="5">U-reduvitoxin-Pr10a.1</fullName>
            <shortName evidence="5">U-RDTX-Pr10a.1</shortName>
        </recommendedName>
    </component>
    <component>
        <recommendedName>
            <fullName evidence="5">U-reduvitoxin-Pr10a.2</fullName>
            <shortName evidence="5">U-RDTX-Pr10a.2</shortName>
        </recommendedName>
    </component>
</protein>
<dbReference type="EMBL" id="MN208341">
    <property type="protein sequence ID" value="QHB21530.1"/>
    <property type="molecule type" value="mRNA"/>
</dbReference>
<dbReference type="GO" id="GO:0005576">
    <property type="term" value="C:extracellular region"/>
    <property type="evidence" value="ECO:0007669"/>
    <property type="project" value="UniProtKB-SubCell"/>
</dbReference>
<dbReference type="GO" id="GO:0004867">
    <property type="term" value="F:serine-type endopeptidase inhibitor activity"/>
    <property type="evidence" value="ECO:0007669"/>
    <property type="project" value="UniProtKB-KW"/>
</dbReference>
<dbReference type="InterPro" id="IPR008037">
    <property type="entry name" value="Pacifastin_dom"/>
</dbReference>
<dbReference type="InterPro" id="IPR036201">
    <property type="entry name" value="Pacifastin_dom_sf"/>
</dbReference>
<dbReference type="Pfam" id="PF05375">
    <property type="entry name" value="Pacifastin_I"/>
    <property type="match status" value="2"/>
</dbReference>
<dbReference type="SUPFAM" id="SSF57283">
    <property type="entry name" value="PMP inhibitors"/>
    <property type="match status" value="2"/>
</dbReference>
<dbReference type="PROSITE" id="PS51446">
    <property type="entry name" value="PACIFASTIN"/>
    <property type="match status" value="2"/>
</dbReference>
<keyword id="KW-1015">Disulfide bond</keyword>
<keyword id="KW-0646">Protease inhibitor</keyword>
<keyword id="KW-0677">Repeat</keyword>
<keyword id="KW-0964">Secreted</keyword>
<keyword id="KW-0722">Serine protease inhibitor</keyword>
<keyword id="KW-0732">Signal</keyword>
<name>PI10A_PLARH</name>
<accession>A0A6B9KZ89</accession>
<feature type="signal peptide" evidence="2">
    <location>
        <begin position="1"/>
        <end position="18"/>
    </location>
</feature>
<feature type="chain" id="PRO_0000454314" description="U-reduvitoxin-Pr10a.1" evidence="7">
    <location>
        <begin position="19"/>
        <end position="59"/>
    </location>
</feature>
<feature type="chain" id="PRO_5025442757" description="U-reduvitoxin-Pr10a.2" evidence="4">
    <location>
        <begin position="60"/>
        <end position="97"/>
    </location>
</feature>
<feature type="domain" description="Pacifastin 1" evidence="3">
    <location>
        <begin position="22"/>
        <end position="59"/>
    </location>
</feature>
<feature type="domain" description="Pacifastin 2" evidence="3">
    <location>
        <begin position="62"/>
        <end position="97"/>
    </location>
</feature>
<feature type="region of interest" description="Pro-Pro-Arg motif necessary for proteolytic processing" evidence="7">
    <location>
        <begin position="57"/>
        <end position="59"/>
    </location>
</feature>
<feature type="site" description="Reactive bond" evidence="3">
    <location>
        <begin position="53"/>
        <end position="54"/>
    </location>
</feature>
<feature type="disulfide bond" evidence="7">
    <location>
        <begin position="24"/>
        <end position="42"/>
    </location>
</feature>
<feature type="disulfide bond" evidence="3">
    <location>
        <begin position="37"/>
        <end position="56"/>
    </location>
</feature>
<feature type="disulfide bond" evidence="3">
    <location>
        <begin position="40"/>
        <end position="51"/>
    </location>
</feature>
<feature type="disulfide bond" evidence="3">
    <location>
        <begin position="65"/>
        <end position="82"/>
    </location>
</feature>
<feature type="disulfide bond" evidence="3">
    <location>
        <begin position="77"/>
        <end position="96"/>
    </location>
</feature>
<feature type="disulfide bond" evidence="3">
    <location>
        <begin position="80"/>
        <end position="91"/>
    </location>
</feature>
<proteinExistence type="evidence at protein level"/>
<organism>
    <name type="scientific">Platymeris rhadamanthus</name>
    <name type="common">Red spot assassin bug</name>
    <dbReference type="NCBI Taxonomy" id="1134088"/>
    <lineage>
        <taxon>Eukaryota</taxon>
        <taxon>Metazoa</taxon>
        <taxon>Ecdysozoa</taxon>
        <taxon>Arthropoda</taxon>
        <taxon>Hexapoda</taxon>
        <taxon>Insecta</taxon>
        <taxon>Pterygota</taxon>
        <taxon>Neoptera</taxon>
        <taxon>Paraneoptera</taxon>
        <taxon>Hemiptera</taxon>
        <taxon>Heteroptera</taxon>
        <taxon>Panheteroptera</taxon>
        <taxon>Cimicomorpha</taxon>
        <taxon>Reduviidae</taxon>
        <taxon>Platymeris</taxon>
    </lineage>
</organism>
<sequence>MKTALFLVFALAFIAVEGKFSKACSKPGQTVLAPDGCNHCRCSKNGIIMGCTKKMCPPRTMKQSCKPGATFKHKDGCNTCKCSDDGKSARCTARLCW</sequence>
<reference key="1">
    <citation type="journal article" date="2019" name="Toxins">
        <title>Missiles of mass disruption: composition and glandular origin of venom used as a projectile defensive weapon by the assassin bug Platymeris rhadamanthus.</title>
        <authorList>
            <person name="Walker A.A."/>
            <person name="Robinson S.D."/>
            <person name="Undheim E.A.B."/>
            <person name="Jin J."/>
            <person name="Han X."/>
            <person name="Fry B.G."/>
            <person name="Vetter I."/>
            <person name="King G.F."/>
        </authorList>
    </citation>
    <scope>NUCLEOTIDE SEQUENCE [MRNA]</scope>
    <scope>MASS SPECTROMETRY</scope>
    <scope>SUBCELLULAR LOCATION</scope>
    <source>
        <tissue>Venom</tissue>
        <tissue>Venom gland</tissue>
    </source>
</reference>